<name>LOLD_SALCH</name>
<sequence>MNKILLQCDNLCKRYQEGTVQTDVLHDISFSIGEGEMMAIVGSSGSGKSTLLHLLGGLDTPTSGDVIFSGQPMSKLSSAAKAELRNQKLGFIYQFHHLLPDFTALENVAMPLLIGKKKPAEIDARAREMLHAVGLEHRATHRPSELSGGERQRVAIARALVNNPRLVLADEPTGNLDARNADSIFELLGELNRLQGTAFLVVTHDLQLAKRMSRQLEMRDGRLTAELSLMGAE</sequence>
<reference key="1">
    <citation type="journal article" date="2005" name="Nucleic Acids Res.">
        <title>The genome sequence of Salmonella enterica serovar Choleraesuis, a highly invasive and resistant zoonotic pathogen.</title>
        <authorList>
            <person name="Chiu C.-H."/>
            <person name="Tang P."/>
            <person name="Chu C."/>
            <person name="Hu S."/>
            <person name="Bao Q."/>
            <person name="Yu J."/>
            <person name="Chou Y.-Y."/>
            <person name="Wang H.-S."/>
            <person name="Lee Y.-S."/>
        </authorList>
    </citation>
    <scope>NUCLEOTIDE SEQUENCE [LARGE SCALE GENOMIC DNA]</scope>
    <source>
        <strain>SC-B67</strain>
    </source>
</reference>
<feature type="chain" id="PRO_0000272147" description="Lipoprotein-releasing system ATP-binding protein LolD">
    <location>
        <begin position="1"/>
        <end position="233"/>
    </location>
</feature>
<feature type="domain" description="ABC transporter" evidence="1">
    <location>
        <begin position="6"/>
        <end position="233"/>
    </location>
</feature>
<feature type="binding site" evidence="1">
    <location>
        <begin position="42"/>
        <end position="49"/>
    </location>
    <ligand>
        <name>ATP</name>
        <dbReference type="ChEBI" id="CHEBI:30616"/>
    </ligand>
</feature>
<dbReference type="EC" id="7.6.2.-" evidence="1"/>
<dbReference type="EMBL" id="AE017220">
    <property type="protein sequence ID" value="AAX65074.1"/>
    <property type="molecule type" value="Genomic_DNA"/>
</dbReference>
<dbReference type="RefSeq" id="WP_001539722.1">
    <property type="nucleotide sequence ID" value="NC_006905.1"/>
</dbReference>
<dbReference type="SMR" id="Q57QD7"/>
<dbReference type="KEGG" id="sec:SCH_1168"/>
<dbReference type="HOGENOM" id="CLU_000604_1_22_6"/>
<dbReference type="Proteomes" id="UP000000538">
    <property type="component" value="Chromosome"/>
</dbReference>
<dbReference type="GO" id="GO:0005886">
    <property type="term" value="C:plasma membrane"/>
    <property type="evidence" value="ECO:0007669"/>
    <property type="project" value="UniProtKB-SubCell"/>
</dbReference>
<dbReference type="GO" id="GO:0005524">
    <property type="term" value="F:ATP binding"/>
    <property type="evidence" value="ECO:0007669"/>
    <property type="project" value="UniProtKB-KW"/>
</dbReference>
<dbReference type="GO" id="GO:0016887">
    <property type="term" value="F:ATP hydrolysis activity"/>
    <property type="evidence" value="ECO:0007669"/>
    <property type="project" value="InterPro"/>
</dbReference>
<dbReference type="GO" id="GO:0022857">
    <property type="term" value="F:transmembrane transporter activity"/>
    <property type="evidence" value="ECO:0007669"/>
    <property type="project" value="TreeGrafter"/>
</dbReference>
<dbReference type="GO" id="GO:0044874">
    <property type="term" value="P:lipoprotein localization to outer membrane"/>
    <property type="evidence" value="ECO:0007669"/>
    <property type="project" value="TreeGrafter"/>
</dbReference>
<dbReference type="GO" id="GO:0089705">
    <property type="term" value="P:protein localization to outer membrane"/>
    <property type="evidence" value="ECO:0007669"/>
    <property type="project" value="TreeGrafter"/>
</dbReference>
<dbReference type="CDD" id="cd03255">
    <property type="entry name" value="ABC_MJ0796_LolCDE_FtsE"/>
    <property type="match status" value="1"/>
</dbReference>
<dbReference type="FunFam" id="3.40.50.300:FF:000230">
    <property type="entry name" value="Lipoprotein-releasing system ATP-binding protein LolD"/>
    <property type="match status" value="1"/>
</dbReference>
<dbReference type="Gene3D" id="3.40.50.300">
    <property type="entry name" value="P-loop containing nucleotide triphosphate hydrolases"/>
    <property type="match status" value="1"/>
</dbReference>
<dbReference type="InterPro" id="IPR003593">
    <property type="entry name" value="AAA+_ATPase"/>
</dbReference>
<dbReference type="InterPro" id="IPR003439">
    <property type="entry name" value="ABC_transporter-like_ATP-bd"/>
</dbReference>
<dbReference type="InterPro" id="IPR017871">
    <property type="entry name" value="ABC_transporter-like_CS"/>
</dbReference>
<dbReference type="InterPro" id="IPR015854">
    <property type="entry name" value="ABC_transpr_LolD-like"/>
</dbReference>
<dbReference type="InterPro" id="IPR011924">
    <property type="entry name" value="LolD_lipo_ATP-bd"/>
</dbReference>
<dbReference type="InterPro" id="IPR017911">
    <property type="entry name" value="MacB-like_ATP-bd"/>
</dbReference>
<dbReference type="InterPro" id="IPR027417">
    <property type="entry name" value="P-loop_NTPase"/>
</dbReference>
<dbReference type="NCBIfam" id="TIGR02211">
    <property type="entry name" value="LolD_lipo_ex"/>
    <property type="match status" value="1"/>
</dbReference>
<dbReference type="NCBIfam" id="NF008639">
    <property type="entry name" value="PRK11629.1"/>
    <property type="match status" value="1"/>
</dbReference>
<dbReference type="PANTHER" id="PTHR24220">
    <property type="entry name" value="IMPORT ATP-BINDING PROTEIN"/>
    <property type="match status" value="1"/>
</dbReference>
<dbReference type="PANTHER" id="PTHR24220:SF689">
    <property type="entry name" value="LIPOPROTEIN-RELEASING SYSTEM ATP-BINDING PROTEIN LOLD"/>
    <property type="match status" value="1"/>
</dbReference>
<dbReference type="Pfam" id="PF00005">
    <property type="entry name" value="ABC_tran"/>
    <property type="match status" value="1"/>
</dbReference>
<dbReference type="SMART" id="SM00382">
    <property type="entry name" value="AAA"/>
    <property type="match status" value="1"/>
</dbReference>
<dbReference type="SUPFAM" id="SSF52540">
    <property type="entry name" value="P-loop containing nucleoside triphosphate hydrolases"/>
    <property type="match status" value="1"/>
</dbReference>
<dbReference type="PROSITE" id="PS00211">
    <property type="entry name" value="ABC_TRANSPORTER_1"/>
    <property type="match status" value="1"/>
</dbReference>
<dbReference type="PROSITE" id="PS50893">
    <property type="entry name" value="ABC_TRANSPORTER_2"/>
    <property type="match status" value="1"/>
</dbReference>
<dbReference type="PROSITE" id="PS51244">
    <property type="entry name" value="LOLD"/>
    <property type="match status" value="1"/>
</dbReference>
<accession>Q57QD7</accession>
<keyword id="KW-0067">ATP-binding</keyword>
<keyword id="KW-0997">Cell inner membrane</keyword>
<keyword id="KW-1003">Cell membrane</keyword>
<keyword id="KW-0472">Membrane</keyword>
<keyword id="KW-0547">Nucleotide-binding</keyword>
<keyword id="KW-1278">Translocase</keyword>
<keyword id="KW-0813">Transport</keyword>
<gene>
    <name evidence="1" type="primary">lolD</name>
    <name type="ordered locus">SCH_1168</name>
</gene>
<organism>
    <name type="scientific">Salmonella choleraesuis (strain SC-B67)</name>
    <dbReference type="NCBI Taxonomy" id="321314"/>
    <lineage>
        <taxon>Bacteria</taxon>
        <taxon>Pseudomonadati</taxon>
        <taxon>Pseudomonadota</taxon>
        <taxon>Gammaproteobacteria</taxon>
        <taxon>Enterobacterales</taxon>
        <taxon>Enterobacteriaceae</taxon>
        <taxon>Salmonella</taxon>
    </lineage>
</organism>
<evidence type="ECO:0000255" key="1">
    <source>
        <dbReference type="HAMAP-Rule" id="MF_01708"/>
    </source>
</evidence>
<comment type="function">
    <text evidence="1">Part of the ABC transporter complex LolCDE involved in the translocation of mature outer membrane-directed lipoproteins, from the inner membrane to the periplasmic chaperone, LolA. Responsible for the formation of the LolA-lipoprotein complex in an ATP-dependent manner.</text>
</comment>
<comment type="subunit">
    <text evidence="1">The complex is composed of two ATP-binding proteins (LolD) and two transmembrane proteins (LolC and LolE).</text>
</comment>
<comment type="subcellular location">
    <subcellularLocation>
        <location evidence="1">Cell inner membrane</location>
        <topology evidence="1">Peripheral membrane protein</topology>
    </subcellularLocation>
</comment>
<comment type="similarity">
    <text evidence="1">Belongs to the ABC transporter superfamily. Lipoprotein translocase (TC 3.A.1.125) family.</text>
</comment>
<protein>
    <recommendedName>
        <fullName evidence="1">Lipoprotein-releasing system ATP-binding protein LolD</fullName>
        <ecNumber evidence="1">7.6.2.-</ecNumber>
    </recommendedName>
</protein>
<proteinExistence type="inferred from homology"/>